<name>RL101_ORYSJ</name>
<comment type="subunit">
    <text evidence="1">Component of the small ribosomal subunit. Mature ribosomes consist of a small (40S) and a large (60S) subunit. The 40S subunit contains about 33 different proteins and 1 molecule of RNA (18S). The 60S subunit contains about 49 different proteins and 3 molecules of RNA (25S, 5.8S and 5S) (By similarity).</text>
</comment>
<comment type="similarity">
    <text evidence="2">Belongs to the universal ribosomal protein uL16 family.</text>
</comment>
<keyword id="KW-1185">Reference proteome</keyword>
<keyword id="KW-0687">Ribonucleoprotein</keyword>
<keyword id="KW-0689">Ribosomal protein</keyword>
<organism>
    <name type="scientific">Oryza sativa subsp. japonica</name>
    <name type="common">Rice</name>
    <dbReference type="NCBI Taxonomy" id="39947"/>
    <lineage>
        <taxon>Eukaryota</taxon>
        <taxon>Viridiplantae</taxon>
        <taxon>Streptophyta</taxon>
        <taxon>Embryophyta</taxon>
        <taxon>Tracheophyta</taxon>
        <taxon>Spermatophyta</taxon>
        <taxon>Magnoliopsida</taxon>
        <taxon>Liliopsida</taxon>
        <taxon>Poales</taxon>
        <taxon>Poaceae</taxon>
        <taxon>BOP clade</taxon>
        <taxon>Oryzoideae</taxon>
        <taxon>Oryzeae</taxon>
        <taxon>Oryzinae</taxon>
        <taxon>Oryza</taxon>
        <taxon>Oryza sativa</taxon>
    </lineage>
</organism>
<reference key="1">
    <citation type="journal article" date="2005" name="BMC Biol.">
        <title>The sequence of rice chromosomes 11 and 12, rich in disease resistance genes and recent gene duplications.</title>
        <authorList>
            <consortium name="The rice chromosomes 11 and 12 sequencing consortia"/>
        </authorList>
    </citation>
    <scope>NUCLEOTIDE SEQUENCE [LARGE SCALE GENOMIC DNA]</scope>
    <source>
        <strain>cv. Nipponbare</strain>
    </source>
</reference>
<reference key="2">
    <citation type="journal article" date="2005" name="Nature">
        <title>The map-based sequence of the rice genome.</title>
        <authorList>
            <consortium name="International rice genome sequencing project (IRGSP)"/>
        </authorList>
    </citation>
    <scope>NUCLEOTIDE SEQUENCE [LARGE SCALE GENOMIC DNA]</scope>
    <source>
        <strain>cv. Nipponbare</strain>
    </source>
</reference>
<reference key="3">
    <citation type="journal article" date="2008" name="Nucleic Acids Res.">
        <title>The rice annotation project database (RAP-DB): 2008 update.</title>
        <authorList>
            <consortium name="The rice annotation project (RAP)"/>
        </authorList>
    </citation>
    <scope>GENOME REANNOTATION</scope>
    <source>
        <strain>cv. Nipponbare</strain>
    </source>
</reference>
<reference key="4">
    <citation type="journal article" date="2013" name="Rice">
        <title>Improvement of the Oryza sativa Nipponbare reference genome using next generation sequence and optical map data.</title>
        <authorList>
            <person name="Kawahara Y."/>
            <person name="de la Bastide M."/>
            <person name="Hamilton J.P."/>
            <person name="Kanamori H."/>
            <person name="McCombie W.R."/>
            <person name="Ouyang S."/>
            <person name="Schwartz D.C."/>
            <person name="Tanaka T."/>
            <person name="Wu J."/>
            <person name="Zhou S."/>
            <person name="Childs K.L."/>
            <person name="Davidson R.M."/>
            <person name="Lin H."/>
            <person name="Quesada-Ocampo L."/>
            <person name="Vaillancourt B."/>
            <person name="Sakai H."/>
            <person name="Lee S.S."/>
            <person name="Kim J."/>
            <person name="Numa H."/>
            <person name="Itoh T."/>
            <person name="Buell C.R."/>
            <person name="Matsumoto T."/>
        </authorList>
    </citation>
    <scope>GENOME REANNOTATION</scope>
    <source>
        <strain>cv. Nipponbare</strain>
    </source>
</reference>
<reference key="5">
    <citation type="journal article" date="2005" name="PLoS Biol.">
        <title>The genomes of Oryza sativa: a history of duplications.</title>
        <authorList>
            <person name="Yu J."/>
            <person name="Wang J."/>
            <person name="Lin W."/>
            <person name="Li S."/>
            <person name="Li H."/>
            <person name="Zhou J."/>
            <person name="Ni P."/>
            <person name="Dong W."/>
            <person name="Hu S."/>
            <person name="Zeng C."/>
            <person name="Zhang J."/>
            <person name="Zhang Y."/>
            <person name="Li R."/>
            <person name="Xu Z."/>
            <person name="Li S."/>
            <person name="Li X."/>
            <person name="Zheng H."/>
            <person name="Cong L."/>
            <person name="Lin L."/>
            <person name="Yin J."/>
            <person name="Geng J."/>
            <person name="Li G."/>
            <person name="Shi J."/>
            <person name="Liu J."/>
            <person name="Lv H."/>
            <person name="Li J."/>
            <person name="Wang J."/>
            <person name="Deng Y."/>
            <person name="Ran L."/>
            <person name="Shi X."/>
            <person name="Wang X."/>
            <person name="Wu Q."/>
            <person name="Li C."/>
            <person name="Ren X."/>
            <person name="Wang J."/>
            <person name="Wang X."/>
            <person name="Li D."/>
            <person name="Liu D."/>
            <person name="Zhang X."/>
            <person name="Ji Z."/>
            <person name="Zhao W."/>
            <person name="Sun Y."/>
            <person name="Zhang Z."/>
            <person name="Bao J."/>
            <person name="Han Y."/>
            <person name="Dong L."/>
            <person name="Ji J."/>
            <person name="Chen P."/>
            <person name="Wu S."/>
            <person name="Liu J."/>
            <person name="Xiao Y."/>
            <person name="Bu D."/>
            <person name="Tan J."/>
            <person name="Yang L."/>
            <person name="Ye C."/>
            <person name="Zhang J."/>
            <person name="Xu J."/>
            <person name="Zhou Y."/>
            <person name="Yu Y."/>
            <person name="Zhang B."/>
            <person name="Zhuang S."/>
            <person name="Wei H."/>
            <person name="Liu B."/>
            <person name="Lei M."/>
            <person name="Yu H."/>
            <person name="Li Y."/>
            <person name="Xu H."/>
            <person name="Wei S."/>
            <person name="He X."/>
            <person name="Fang L."/>
            <person name="Zhang Z."/>
            <person name="Zhang Y."/>
            <person name="Huang X."/>
            <person name="Su Z."/>
            <person name="Tong W."/>
            <person name="Li J."/>
            <person name="Tong Z."/>
            <person name="Li S."/>
            <person name="Ye J."/>
            <person name="Wang L."/>
            <person name="Fang L."/>
            <person name="Lei T."/>
            <person name="Chen C.-S."/>
            <person name="Chen H.-C."/>
            <person name="Xu Z."/>
            <person name="Li H."/>
            <person name="Huang H."/>
            <person name="Zhang F."/>
            <person name="Xu H."/>
            <person name="Li N."/>
            <person name="Zhao C."/>
            <person name="Li S."/>
            <person name="Dong L."/>
            <person name="Huang Y."/>
            <person name="Li L."/>
            <person name="Xi Y."/>
            <person name="Qi Q."/>
            <person name="Li W."/>
            <person name="Zhang B."/>
            <person name="Hu W."/>
            <person name="Zhang Y."/>
            <person name="Tian X."/>
            <person name="Jiao Y."/>
            <person name="Liang X."/>
            <person name="Jin J."/>
            <person name="Gao L."/>
            <person name="Zheng W."/>
            <person name="Hao B."/>
            <person name="Liu S.-M."/>
            <person name="Wang W."/>
            <person name="Yuan L."/>
            <person name="Cao M."/>
            <person name="McDermott J."/>
            <person name="Samudrala R."/>
            <person name="Wang J."/>
            <person name="Wong G.K.-S."/>
            <person name="Yang H."/>
        </authorList>
    </citation>
    <scope>NUCLEOTIDE SEQUENCE [LARGE SCALE GENOMIC DNA]</scope>
    <source>
        <strain>cv. Nipponbare</strain>
    </source>
</reference>
<reference key="6">
    <citation type="journal article" date="2003" name="Science">
        <title>Collection, mapping, and annotation of over 28,000 cDNA clones from japonica rice.</title>
        <authorList>
            <consortium name="The rice full-length cDNA consortium"/>
        </authorList>
    </citation>
    <scope>NUCLEOTIDE SEQUENCE [LARGE SCALE MRNA]</scope>
    <source>
        <strain>cv. Nipponbare</strain>
    </source>
</reference>
<dbReference type="EMBL" id="DP000010">
    <property type="protein sequence ID" value="ABA92102.1"/>
    <property type="molecule type" value="Genomic_DNA"/>
</dbReference>
<dbReference type="EMBL" id="AP008217">
    <property type="protein sequence ID" value="BAF27887.1"/>
    <property type="molecule type" value="Genomic_DNA"/>
</dbReference>
<dbReference type="EMBL" id="AP014967">
    <property type="protein sequence ID" value="BAT13249.1"/>
    <property type="molecule type" value="Genomic_DNA"/>
</dbReference>
<dbReference type="EMBL" id="CM000148">
    <property type="protein sequence ID" value="EAZ17844.1"/>
    <property type="molecule type" value="Genomic_DNA"/>
</dbReference>
<dbReference type="EMBL" id="AK060902">
    <property type="protein sequence ID" value="BAG87607.1"/>
    <property type="molecule type" value="mRNA"/>
</dbReference>
<dbReference type="EMBL" id="AK102971">
    <property type="protein sequence ID" value="BAG95811.1"/>
    <property type="molecule type" value="mRNA"/>
</dbReference>
<dbReference type="RefSeq" id="XP_015617097.1">
    <property type="nucleotide sequence ID" value="XM_015761611.1"/>
</dbReference>
<dbReference type="SMR" id="Q0ITS8"/>
<dbReference type="FunCoup" id="Q0ITS8">
    <property type="interactions" value="2146"/>
</dbReference>
<dbReference type="STRING" id="39947.Q0ITS8"/>
<dbReference type="PaxDb" id="39947-Q0ITS8"/>
<dbReference type="EnsemblPlants" id="Os11t0220800-01">
    <property type="protein sequence ID" value="Os11t0220800-01"/>
    <property type="gene ID" value="Os11g0220800"/>
</dbReference>
<dbReference type="Gramene" id="Os11t0220800-01">
    <property type="protein sequence ID" value="Os11t0220800-01"/>
    <property type="gene ID" value="Os11g0220800"/>
</dbReference>
<dbReference type="KEGG" id="dosa:Os11g0220800"/>
<dbReference type="eggNOG" id="KOG0857">
    <property type="taxonomic scope" value="Eukaryota"/>
</dbReference>
<dbReference type="HOGENOM" id="CLU_084051_0_0_1"/>
<dbReference type="InParanoid" id="Q0ITS8"/>
<dbReference type="OMA" id="HHVIREN"/>
<dbReference type="OrthoDB" id="10258869at2759"/>
<dbReference type="Proteomes" id="UP000000763">
    <property type="component" value="Chromosome 11"/>
</dbReference>
<dbReference type="Proteomes" id="UP000007752">
    <property type="component" value="Chromosome 11"/>
</dbReference>
<dbReference type="Proteomes" id="UP000059680">
    <property type="component" value="Chromosome 11"/>
</dbReference>
<dbReference type="GO" id="GO:0022625">
    <property type="term" value="C:cytosolic large ribosomal subunit"/>
    <property type="evidence" value="ECO:0000318"/>
    <property type="project" value="GO_Central"/>
</dbReference>
<dbReference type="GO" id="GO:0003735">
    <property type="term" value="F:structural constituent of ribosome"/>
    <property type="evidence" value="ECO:0000318"/>
    <property type="project" value="GO_Central"/>
</dbReference>
<dbReference type="GO" id="GO:0006412">
    <property type="term" value="P:translation"/>
    <property type="evidence" value="ECO:0000318"/>
    <property type="project" value="GO_Central"/>
</dbReference>
<dbReference type="CDD" id="cd01433">
    <property type="entry name" value="Ribosomal_L16_L10e"/>
    <property type="match status" value="1"/>
</dbReference>
<dbReference type="FunFam" id="3.90.1170.10:FF:000002">
    <property type="entry name" value="60S ribosomal protein L10"/>
    <property type="match status" value="1"/>
</dbReference>
<dbReference type="Gene3D" id="3.90.1170.10">
    <property type="entry name" value="Ribosomal protein L10e/L16"/>
    <property type="match status" value="1"/>
</dbReference>
<dbReference type="InterPro" id="IPR047873">
    <property type="entry name" value="Ribosomal_uL16"/>
</dbReference>
<dbReference type="InterPro" id="IPR018255">
    <property type="entry name" value="Ribosomal_uL16_CS_euk_arc"/>
</dbReference>
<dbReference type="InterPro" id="IPR016180">
    <property type="entry name" value="Ribosomal_uL16_dom"/>
</dbReference>
<dbReference type="InterPro" id="IPR001197">
    <property type="entry name" value="Ribosomal_uL16_euk_arch"/>
</dbReference>
<dbReference type="InterPro" id="IPR036920">
    <property type="entry name" value="Ribosomal_uL16_sf"/>
</dbReference>
<dbReference type="NCBIfam" id="NF003239">
    <property type="entry name" value="PRK04199.1-4"/>
    <property type="match status" value="1"/>
</dbReference>
<dbReference type="NCBIfam" id="TIGR00279">
    <property type="entry name" value="uL16_euk_arch"/>
    <property type="match status" value="1"/>
</dbReference>
<dbReference type="PANTHER" id="PTHR11726">
    <property type="entry name" value="60S RIBOSOMAL PROTEIN L10"/>
    <property type="match status" value="1"/>
</dbReference>
<dbReference type="Pfam" id="PF00252">
    <property type="entry name" value="Ribosomal_L16"/>
    <property type="match status" value="1"/>
</dbReference>
<dbReference type="PIRSF" id="PIRSF005590">
    <property type="entry name" value="Ribosomal_L10"/>
    <property type="match status" value="1"/>
</dbReference>
<dbReference type="SUPFAM" id="SSF54686">
    <property type="entry name" value="Ribosomal protein L16p/L10e"/>
    <property type="match status" value="1"/>
</dbReference>
<dbReference type="PROSITE" id="PS01257">
    <property type="entry name" value="RIBOSOMAL_L10E"/>
    <property type="match status" value="1"/>
</dbReference>
<evidence type="ECO:0000250" key="1"/>
<evidence type="ECO:0000305" key="2"/>
<accession>Q0ITS8</accession>
<accession>B7E5G0</accession>
<accession>P45635</accession>
<accession>Q2R8Q3</accession>
<accession>Q40650</accession>
<proteinExistence type="evidence at transcript level"/>
<gene>
    <name type="primary">SC34</name>
    <name type="ordered locus">Os11g0220800</name>
    <name type="ordered locus">LOC_Os11g11390</name>
    <name type="ORF">OsJ_032053</name>
</gene>
<protein>
    <recommendedName>
        <fullName evidence="2">Large ribosomal subunit protein uL16z</fullName>
    </recommendedName>
    <alternativeName>
        <fullName>60S ribosomal protein L10-1</fullName>
    </alternativeName>
    <alternativeName>
        <fullName>Protein QM</fullName>
    </alternativeName>
    <alternativeName>
        <fullName>Putative tumor suppressor SC34</fullName>
    </alternativeName>
</protein>
<sequence length="224" mass="25347">MGRRPARCYRQIKNKPYPKSRYCRGVPDPKIRIYDVGMKKKGVDEFPYCVHLVSWEKENVSSEALEAARIACNKYMTKNAGKDAFHLRVRVHPFHVLRINKMLSCAGADRLQTGMRGAFGKPQGTCARVDIGQVLLSVRCKESNAKHAEEALRRAKFKFPGRQKIIHSRKWGFTKFTREEYVKLKAEGRIMSDGVNAQLLGSHGRLAKRAPGKAFLAETIQASA</sequence>
<feature type="chain" id="PRO_0000147119" description="Large ribosomal subunit protein uL16z">
    <location>
        <begin position="1"/>
        <end position="224"/>
    </location>
</feature>